<dbReference type="EMBL" id="AF336309">
    <property type="protein sequence ID" value="AAK69234.1"/>
    <property type="molecule type" value="Genomic_DNA"/>
</dbReference>
<dbReference type="EMBL" id="AM286416">
    <property type="protein sequence ID" value="CAL10059.1"/>
    <property type="molecule type" value="Genomic_DNA"/>
</dbReference>
<dbReference type="RefSeq" id="NP_783686.1">
    <property type="nucleotide sequence ID" value="NC_004564.1"/>
</dbReference>
<dbReference type="RefSeq" id="NP_863534.1">
    <property type="nucleotide sequence ID" value="NC_005017.1"/>
</dbReference>
<dbReference type="RefSeq" id="WP_005176453.1">
    <property type="nucleotide sequence ID" value="NC_008791.1"/>
</dbReference>
<dbReference type="RefSeq" id="YP_001004089.1">
    <property type="nucleotide sequence ID" value="NC_008791.1"/>
</dbReference>
<dbReference type="SMR" id="A1JU93"/>
<dbReference type="TCDB" id="3.A.6.1.1">
    <property type="family name" value="the type iii (virulence-related) secretory pathway (iiisp) family"/>
</dbReference>
<dbReference type="KEGG" id="yen:YEP0037"/>
<dbReference type="PATRIC" id="fig|393305.7.peg.38"/>
<dbReference type="eggNOG" id="ENOG5032ZXD">
    <property type="taxonomic scope" value="Bacteria"/>
</dbReference>
<dbReference type="HOGENOM" id="CLU_154680_0_0_6"/>
<dbReference type="OrthoDB" id="6944076at2"/>
<dbReference type="PRO" id="PR:A1JU93"/>
<dbReference type="Proteomes" id="UP000000642">
    <property type="component" value="Plasmid pYVe8081"/>
</dbReference>
<dbReference type="GO" id="GO:0005737">
    <property type="term" value="C:cytoplasm"/>
    <property type="evidence" value="ECO:0007669"/>
    <property type="project" value="UniProtKB-SubCell"/>
</dbReference>
<dbReference type="GO" id="GO:0005886">
    <property type="term" value="C:plasma membrane"/>
    <property type="evidence" value="ECO:0007669"/>
    <property type="project" value="UniProtKB-SubCell"/>
</dbReference>
<dbReference type="GO" id="GO:0030254">
    <property type="term" value="P:protein secretion by the type III secretion system"/>
    <property type="evidence" value="ECO:0007669"/>
    <property type="project" value="InterPro"/>
</dbReference>
<dbReference type="CDD" id="cd17027">
    <property type="entry name" value="T3SC_IA_YscB_AscB-like"/>
    <property type="match status" value="1"/>
</dbReference>
<dbReference type="Gene3D" id="3.30.1460.10">
    <property type="match status" value="1"/>
</dbReference>
<dbReference type="InterPro" id="IPR013353">
    <property type="entry name" value="T3SS_YscB"/>
</dbReference>
<dbReference type="InterPro" id="IPR010261">
    <property type="entry name" value="Tir_chaperone"/>
</dbReference>
<dbReference type="NCBIfam" id="TIGR02513">
    <property type="entry name" value="type_III_yscB"/>
    <property type="match status" value="1"/>
</dbReference>
<dbReference type="Pfam" id="PF05932">
    <property type="entry name" value="CesT"/>
    <property type="match status" value="1"/>
</dbReference>
<dbReference type="SUPFAM" id="SSF69635">
    <property type="entry name" value="Type III secretory system chaperone-like"/>
    <property type="match status" value="1"/>
</dbReference>
<name>YSCB_YERE8</name>
<accession>A1JU93</accession>
<accession>Q01243</accession>
<accession>Q93KT2</accession>
<feature type="chain" id="PRO_0000281773" description="Chaperone protein YscB">
    <location>
        <begin position="1"/>
        <end position="137"/>
    </location>
</feature>
<keyword id="KW-0997">Cell inner membrane</keyword>
<keyword id="KW-1003">Cell membrane</keyword>
<keyword id="KW-0143">Chaperone</keyword>
<keyword id="KW-0963">Cytoplasm</keyword>
<keyword id="KW-0472">Membrane</keyword>
<keyword id="KW-0614">Plasmid</keyword>
<comment type="function">
    <text evidence="1">Functions as a specific chaperone for YopN. It could facilitate the secretion and the subsequent translocation of YopN (By similarity).</text>
</comment>
<comment type="subunit">
    <text evidence="1">Interacts with SycN to form a complex which specifically binds to YopN.</text>
</comment>
<comment type="subcellular location">
    <subcellularLocation>
        <location evidence="1">Cytoplasm</location>
    </subcellularLocation>
    <subcellularLocation>
        <location evidence="1">Cell inner membrane</location>
        <topology evidence="1">Peripheral membrane protein</topology>
    </subcellularLocation>
    <text evidence="1">Not exported across the inner membrane.</text>
</comment>
<sequence>MQNLLKNLATSLGREPFVADKQGVYRLTIDKHLVMLAPHGSELVLRTPIDAPMLREGNNVNVTLLRSLMQQALAWAKRYPQTLVLDDCGQLVLEARLRLQELDTHGLQEVINKQLALLEYLIPQLTPFSVASRVGWN</sequence>
<organism>
    <name type="scientific">Yersinia enterocolitica serotype O:8 / biotype 1B (strain NCTC 13174 / 8081)</name>
    <dbReference type="NCBI Taxonomy" id="393305"/>
    <lineage>
        <taxon>Bacteria</taxon>
        <taxon>Pseudomonadati</taxon>
        <taxon>Pseudomonadota</taxon>
        <taxon>Gammaproteobacteria</taxon>
        <taxon>Enterobacterales</taxon>
        <taxon>Yersiniaceae</taxon>
        <taxon>Yersinia</taxon>
    </lineage>
</organism>
<evidence type="ECO:0000250" key="1"/>
<protein>
    <recommendedName>
        <fullName>Chaperone protein YscB</fullName>
    </recommendedName>
    <alternativeName>
        <fullName>Yop proteins translocation protein B</fullName>
    </alternativeName>
</protein>
<geneLocation type="plasmid">
    <name>pYVe8081</name>
</geneLocation>
<reference key="1">
    <citation type="journal article" date="2001" name="Infect. Immun.">
        <title>Complete DNA sequence of Yersinia enterocolitica serotype 0:8 low-calcium-response plasmid reveals a new virulence plasmid-associated replicon.</title>
        <authorList>
            <person name="Snellings N.J."/>
            <person name="Popek M."/>
            <person name="Lindler L.E."/>
        </authorList>
    </citation>
    <scope>NUCLEOTIDE SEQUENCE [GENOMIC DNA]</scope>
</reference>
<reference key="2">
    <citation type="journal article" date="2006" name="PLoS Genet.">
        <title>The complete genome sequence and comparative genome analysis of the high pathogenicity Yersinia enterocolitica strain 8081.</title>
        <authorList>
            <person name="Thomson N.R."/>
            <person name="Howard S."/>
            <person name="Wren B.W."/>
            <person name="Holden M.T.G."/>
            <person name="Crossman L."/>
            <person name="Challis G.L."/>
            <person name="Churcher C."/>
            <person name="Mungall K."/>
            <person name="Brooks K."/>
            <person name="Chillingworth T."/>
            <person name="Feltwell T."/>
            <person name="Abdellah Z."/>
            <person name="Hauser H."/>
            <person name="Jagels K."/>
            <person name="Maddison M."/>
            <person name="Moule S."/>
            <person name="Sanders M."/>
            <person name="Whitehead S."/>
            <person name="Quail M.A."/>
            <person name="Dougan G."/>
            <person name="Parkhill J."/>
            <person name="Prentice M.B."/>
        </authorList>
    </citation>
    <scope>NUCLEOTIDE SEQUENCE [LARGE SCALE GENOMIC DNA]</scope>
    <source>
        <strain>NCTC 13174 / 8081</strain>
    </source>
</reference>
<gene>
    <name type="primary">yscB</name>
    <name type="ordered locus">YEP0037</name>
</gene>
<proteinExistence type="inferred from homology"/>